<proteinExistence type="inferred from homology"/>
<name>OGT_THEGJ</name>
<keyword id="KW-0963">Cytoplasm</keyword>
<keyword id="KW-0227">DNA damage</keyword>
<keyword id="KW-0234">DNA repair</keyword>
<keyword id="KW-0489">Methyltransferase</keyword>
<keyword id="KW-1185">Reference proteome</keyword>
<keyword id="KW-0808">Transferase</keyword>
<evidence type="ECO:0000250" key="1">
    <source>
        <dbReference type="UniProtKB" id="O74023"/>
    </source>
</evidence>
<protein>
    <recommendedName>
        <fullName evidence="1">Methylated-DNA--protein-cysteine methyltransferase</fullName>
        <ecNumber evidence="1">2.1.1.63</ecNumber>
    </recommendedName>
    <alternativeName>
        <fullName evidence="1">6-O-methylguanine-DNA methyltransferase</fullName>
        <shortName evidence="1">MGMT</shortName>
    </alternativeName>
    <alternativeName>
        <fullName evidence="1">O-6-methylguanine-DNA-alkyltransferase</fullName>
    </alternativeName>
</protein>
<gene>
    <name evidence="1" type="primary">ogt</name>
    <name type="ordered locus">TGAM_0325</name>
</gene>
<comment type="function">
    <text evidence="1">Involved in the cellular defense against the biological effects of O6-methylguanine (O6-MeG) and O4-methylthymine (O4-MeT) in DNA. Repairs the methylated nucleobase in DNA by stoichiometrically transferring the methyl group to a cysteine residue in the enzyme. This is a suicide reaction: the enzyme is irreversibly inactivated.</text>
</comment>
<comment type="catalytic activity">
    <reaction evidence="1">
        <text>a 6-O-methyl-2'-deoxyguanosine in DNA + L-cysteinyl-[protein] = S-methyl-L-cysteinyl-[protein] + a 2'-deoxyguanosine in DNA</text>
        <dbReference type="Rhea" id="RHEA:24000"/>
        <dbReference type="Rhea" id="RHEA-COMP:10131"/>
        <dbReference type="Rhea" id="RHEA-COMP:10132"/>
        <dbReference type="Rhea" id="RHEA-COMP:11367"/>
        <dbReference type="Rhea" id="RHEA-COMP:11368"/>
        <dbReference type="ChEBI" id="CHEBI:29950"/>
        <dbReference type="ChEBI" id="CHEBI:82612"/>
        <dbReference type="ChEBI" id="CHEBI:85445"/>
        <dbReference type="ChEBI" id="CHEBI:85448"/>
        <dbReference type="EC" id="2.1.1.63"/>
    </reaction>
</comment>
<comment type="catalytic activity">
    <reaction evidence="1">
        <text>a 4-O-methyl-thymidine in DNA + L-cysteinyl-[protein] = a thymidine in DNA + S-methyl-L-cysteinyl-[protein]</text>
        <dbReference type="Rhea" id="RHEA:53428"/>
        <dbReference type="Rhea" id="RHEA-COMP:10131"/>
        <dbReference type="Rhea" id="RHEA-COMP:10132"/>
        <dbReference type="Rhea" id="RHEA-COMP:13555"/>
        <dbReference type="Rhea" id="RHEA-COMP:13556"/>
        <dbReference type="ChEBI" id="CHEBI:29950"/>
        <dbReference type="ChEBI" id="CHEBI:82612"/>
        <dbReference type="ChEBI" id="CHEBI:137386"/>
        <dbReference type="ChEBI" id="CHEBI:137387"/>
        <dbReference type="EC" id="2.1.1.63"/>
    </reaction>
</comment>
<comment type="subcellular location">
    <subcellularLocation>
        <location evidence="1">Cytoplasm</location>
    </subcellularLocation>
</comment>
<comment type="miscellaneous">
    <text evidence="1">This enzyme catalyzes only one turnover and therefore is not strictly catalytic. According to one definition, an enzyme is a biocatalyst that acts repeatedly and over many reaction cycles.</text>
</comment>
<comment type="similarity">
    <text evidence="1">Belongs to the MGMT family.</text>
</comment>
<accession>C5A3L5</accession>
<feature type="chain" id="PRO_1000212907" description="Methylated-DNA--protein-cysteine methyltransferase">
    <location>
        <begin position="1"/>
        <end position="174"/>
    </location>
</feature>
<feature type="active site" description="Nucleophile; methyl group acceptor" evidence="1">
    <location>
        <position position="141"/>
    </location>
</feature>
<sequence>MLAVERFGVNGRDIWIGVIFHGRIQGISFAFTRGELLERIRNLAEFLRGRDVRVSLDVQPSNYTELVYRVLIGELENEKALPELSFEGVTPFERRVYEWLTKNVKRGTVITYGSLAKALETSPRAVGGAMKRNPYPIIVPCHRVVSREGIGHYNLGIEEKKFLLELEGVKEWTG</sequence>
<reference key="1">
    <citation type="journal article" date="2007" name="Genome Biol.">
        <title>Genome analysis and genome-wide proteomics of Thermococcus gammatolerans, the most radioresistant organism known amongst the Archaea.</title>
        <authorList>
            <person name="Zivanovic Y."/>
            <person name="Armengaud J."/>
            <person name="Lagorce A."/>
            <person name="Leplat C."/>
            <person name="Guerin P."/>
            <person name="Dutertre M."/>
            <person name="Anthouard V."/>
            <person name="Forterre P."/>
            <person name="Wincker P."/>
            <person name="Confalonieri F."/>
        </authorList>
    </citation>
    <scope>NUCLEOTIDE SEQUENCE [LARGE SCALE GENOMIC DNA]</scope>
    <source>
        <strain>DSM 15229 / JCM 11827 / EJ3</strain>
    </source>
</reference>
<dbReference type="EC" id="2.1.1.63" evidence="1"/>
<dbReference type="EMBL" id="CP001398">
    <property type="protein sequence ID" value="ACS32827.1"/>
    <property type="molecule type" value="Genomic_DNA"/>
</dbReference>
<dbReference type="RefSeq" id="WP_015857945.1">
    <property type="nucleotide sequence ID" value="NC_012804.1"/>
</dbReference>
<dbReference type="SMR" id="C5A3L5"/>
<dbReference type="STRING" id="593117.TGAM_0325"/>
<dbReference type="PaxDb" id="593117-TGAM_0325"/>
<dbReference type="GeneID" id="7987791"/>
<dbReference type="KEGG" id="tga:TGAM_0325"/>
<dbReference type="PATRIC" id="fig|593117.10.peg.322"/>
<dbReference type="eggNOG" id="arCOG02724">
    <property type="taxonomic scope" value="Archaea"/>
</dbReference>
<dbReference type="HOGENOM" id="CLU_000445_52_2_2"/>
<dbReference type="OrthoDB" id="372118at2157"/>
<dbReference type="Proteomes" id="UP000001488">
    <property type="component" value="Chromosome"/>
</dbReference>
<dbReference type="GO" id="GO:0005737">
    <property type="term" value="C:cytoplasm"/>
    <property type="evidence" value="ECO:0007669"/>
    <property type="project" value="UniProtKB-SubCell"/>
</dbReference>
<dbReference type="GO" id="GO:0003908">
    <property type="term" value="F:methylated-DNA-[protein]-cysteine S-methyltransferase activity"/>
    <property type="evidence" value="ECO:0007669"/>
    <property type="project" value="UniProtKB-EC"/>
</dbReference>
<dbReference type="GO" id="GO:0006281">
    <property type="term" value="P:DNA repair"/>
    <property type="evidence" value="ECO:0007669"/>
    <property type="project" value="UniProtKB-KW"/>
</dbReference>
<dbReference type="GO" id="GO:0032259">
    <property type="term" value="P:methylation"/>
    <property type="evidence" value="ECO:0007669"/>
    <property type="project" value="UniProtKB-KW"/>
</dbReference>
<dbReference type="CDD" id="cd06445">
    <property type="entry name" value="ATase"/>
    <property type="match status" value="1"/>
</dbReference>
<dbReference type="FunFam" id="1.10.10.10:FF:000214">
    <property type="entry name" value="Methylated-DNA--protein-cysteine methyltransferase"/>
    <property type="match status" value="1"/>
</dbReference>
<dbReference type="Gene3D" id="3.30.160.70">
    <property type="entry name" value="Methylated DNA-protein cysteine methyltransferase domain"/>
    <property type="match status" value="1"/>
</dbReference>
<dbReference type="Gene3D" id="1.10.10.10">
    <property type="entry name" value="Winged helix-like DNA-binding domain superfamily/Winged helix DNA-binding domain"/>
    <property type="match status" value="1"/>
</dbReference>
<dbReference type="InterPro" id="IPR054936">
    <property type="entry name" value="DNA_protcyst_Mta_Thcoc"/>
</dbReference>
<dbReference type="InterPro" id="IPR001497">
    <property type="entry name" value="MethylDNA_cys_MeTrfase_AS"/>
</dbReference>
<dbReference type="InterPro" id="IPR014048">
    <property type="entry name" value="MethylDNA_cys_MeTrfase_DNA-bd"/>
</dbReference>
<dbReference type="InterPro" id="IPR036217">
    <property type="entry name" value="MethylDNA_cys_MeTrfase_DNAb"/>
</dbReference>
<dbReference type="InterPro" id="IPR015236">
    <property type="entry name" value="MGMT_N"/>
</dbReference>
<dbReference type="InterPro" id="IPR036631">
    <property type="entry name" value="MGMT_N_sf"/>
</dbReference>
<dbReference type="InterPro" id="IPR036388">
    <property type="entry name" value="WH-like_DNA-bd_sf"/>
</dbReference>
<dbReference type="NCBIfam" id="NF041132">
    <property type="entry name" value="DNA_protcyst_Mta_Thcoc"/>
    <property type="match status" value="1"/>
</dbReference>
<dbReference type="NCBIfam" id="TIGR00589">
    <property type="entry name" value="ogt"/>
    <property type="match status" value="1"/>
</dbReference>
<dbReference type="NCBIfam" id="NF003022">
    <property type="entry name" value="PRK03887.1"/>
    <property type="match status" value="1"/>
</dbReference>
<dbReference type="PANTHER" id="PTHR46460">
    <property type="entry name" value="METHYLATED-DNA--PROTEIN-CYSTEINE METHYLTRANSFERASE"/>
    <property type="match status" value="1"/>
</dbReference>
<dbReference type="PANTHER" id="PTHR46460:SF1">
    <property type="entry name" value="METHYLATED-DNA--PROTEIN-CYSTEINE METHYLTRANSFERASE"/>
    <property type="match status" value="1"/>
</dbReference>
<dbReference type="Pfam" id="PF01035">
    <property type="entry name" value="DNA_binding_1"/>
    <property type="match status" value="1"/>
</dbReference>
<dbReference type="Pfam" id="PF09153">
    <property type="entry name" value="MGMT_N"/>
    <property type="match status" value="1"/>
</dbReference>
<dbReference type="SUPFAM" id="SSF53155">
    <property type="entry name" value="Methylated DNA-protein cysteine methyltransferase domain"/>
    <property type="match status" value="1"/>
</dbReference>
<dbReference type="SUPFAM" id="SSF46767">
    <property type="entry name" value="Methylated DNA-protein cysteine methyltransferase, C-terminal domain"/>
    <property type="match status" value="1"/>
</dbReference>
<dbReference type="PROSITE" id="PS00374">
    <property type="entry name" value="MGMT"/>
    <property type="match status" value="1"/>
</dbReference>
<organism>
    <name type="scientific">Thermococcus gammatolerans (strain DSM 15229 / JCM 11827 / EJ3)</name>
    <dbReference type="NCBI Taxonomy" id="593117"/>
    <lineage>
        <taxon>Archaea</taxon>
        <taxon>Methanobacteriati</taxon>
        <taxon>Methanobacteriota</taxon>
        <taxon>Thermococci</taxon>
        <taxon>Thermococcales</taxon>
        <taxon>Thermococcaceae</taxon>
        <taxon>Thermococcus</taxon>
    </lineage>
</organism>